<dbReference type="EMBL" id="CP001048">
    <property type="protein sequence ID" value="ACC87401.1"/>
    <property type="molecule type" value="Genomic_DNA"/>
</dbReference>
<dbReference type="RefSeq" id="WP_002209110.1">
    <property type="nucleotide sequence ID" value="NZ_CP009780.1"/>
</dbReference>
<dbReference type="SMR" id="B2K1W6"/>
<dbReference type="GeneID" id="57974272"/>
<dbReference type="KEGG" id="ypb:YPTS_0412"/>
<dbReference type="PATRIC" id="fig|502801.10.peg.4090"/>
<dbReference type="GO" id="GO:0005737">
    <property type="term" value="C:cytoplasm"/>
    <property type="evidence" value="ECO:0007669"/>
    <property type="project" value="UniProtKB-SubCell"/>
</dbReference>
<dbReference type="GO" id="GO:0003700">
    <property type="term" value="F:DNA-binding transcription factor activity"/>
    <property type="evidence" value="ECO:0007669"/>
    <property type="project" value="UniProtKB-UniRule"/>
</dbReference>
<dbReference type="GO" id="GO:0043565">
    <property type="term" value="F:sequence-specific DNA binding"/>
    <property type="evidence" value="ECO:0007669"/>
    <property type="project" value="InterPro"/>
</dbReference>
<dbReference type="GO" id="GO:0045893">
    <property type="term" value="P:positive regulation of DNA-templated transcription"/>
    <property type="evidence" value="ECO:0007669"/>
    <property type="project" value="UniProtKB-UniRule"/>
</dbReference>
<dbReference type="GO" id="GO:0019299">
    <property type="term" value="P:rhamnose metabolic process"/>
    <property type="evidence" value="ECO:0007669"/>
    <property type="project" value="UniProtKB-UniRule"/>
</dbReference>
<dbReference type="CDD" id="cd06977">
    <property type="entry name" value="cupin_RhaR_RhaS-like_N"/>
    <property type="match status" value="1"/>
</dbReference>
<dbReference type="Gene3D" id="1.10.10.60">
    <property type="entry name" value="Homeodomain-like"/>
    <property type="match status" value="1"/>
</dbReference>
<dbReference type="Gene3D" id="2.60.120.10">
    <property type="entry name" value="Jelly Rolls"/>
    <property type="match status" value="1"/>
</dbReference>
<dbReference type="HAMAP" id="MF_01533">
    <property type="entry name" value="HTH_type_RhaR"/>
    <property type="match status" value="1"/>
</dbReference>
<dbReference type="InterPro" id="IPR003313">
    <property type="entry name" value="AraC-bd"/>
</dbReference>
<dbReference type="InterPro" id="IPR009057">
    <property type="entry name" value="Homeodomain-like_sf"/>
</dbReference>
<dbReference type="InterPro" id="IPR018060">
    <property type="entry name" value="HTH_AraC"/>
</dbReference>
<dbReference type="InterPro" id="IPR018062">
    <property type="entry name" value="HTH_AraC-typ_CS"/>
</dbReference>
<dbReference type="InterPro" id="IPR047220">
    <property type="entry name" value="RhaR_RhaS-like_N"/>
</dbReference>
<dbReference type="InterPro" id="IPR014710">
    <property type="entry name" value="RmlC-like_jellyroll"/>
</dbReference>
<dbReference type="InterPro" id="IPR011051">
    <property type="entry name" value="RmlC_Cupin_sf"/>
</dbReference>
<dbReference type="InterPro" id="IPR023699">
    <property type="entry name" value="Tscrpt_act_RhaR"/>
</dbReference>
<dbReference type="InterPro" id="IPR020449">
    <property type="entry name" value="Tscrpt_reg_AraC-type_HTH"/>
</dbReference>
<dbReference type="NCBIfam" id="NF010026">
    <property type="entry name" value="PRK13501.1"/>
    <property type="match status" value="1"/>
</dbReference>
<dbReference type="PANTHER" id="PTHR43280">
    <property type="entry name" value="ARAC-FAMILY TRANSCRIPTIONAL REGULATOR"/>
    <property type="match status" value="1"/>
</dbReference>
<dbReference type="PANTHER" id="PTHR43280:SF13">
    <property type="entry name" value="HTH-TYPE TRANSCRIPTIONAL ACTIVATOR RHAR"/>
    <property type="match status" value="1"/>
</dbReference>
<dbReference type="Pfam" id="PF02311">
    <property type="entry name" value="AraC_binding"/>
    <property type="match status" value="1"/>
</dbReference>
<dbReference type="Pfam" id="PF12833">
    <property type="entry name" value="HTH_18"/>
    <property type="match status" value="1"/>
</dbReference>
<dbReference type="PRINTS" id="PR00032">
    <property type="entry name" value="HTHARAC"/>
</dbReference>
<dbReference type="SMART" id="SM00342">
    <property type="entry name" value="HTH_ARAC"/>
    <property type="match status" value="1"/>
</dbReference>
<dbReference type="SUPFAM" id="SSF46689">
    <property type="entry name" value="Homeodomain-like"/>
    <property type="match status" value="1"/>
</dbReference>
<dbReference type="SUPFAM" id="SSF51182">
    <property type="entry name" value="RmlC-like cupins"/>
    <property type="match status" value="1"/>
</dbReference>
<dbReference type="PROSITE" id="PS00041">
    <property type="entry name" value="HTH_ARAC_FAMILY_1"/>
    <property type="match status" value="1"/>
</dbReference>
<dbReference type="PROSITE" id="PS01124">
    <property type="entry name" value="HTH_ARAC_FAMILY_2"/>
    <property type="match status" value="1"/>
</dbReference>
<reference key="1">
    <citation type="submission" date="2008-04" db="EMBL/GenBank/DDBJ databases">
        <title>Complete sequence of Yersinia pseudotuberculosis PB1/+.</title>
        <authorList>
            <person name="Copeland A."/>
            <person name="Lucas S."/>
            <person name="Lapidus A."/>
            <person name="Glavina del Rio T."/>
            <person name="Dalin E."/>
            <person name="Tice H."/>
            <person name="Bruce D."/>
            <person name="Goodwin L."/>
            <person name="Pitluck S."/>
            <person name="Munk A.C."/>
            <person name="Brettin T."/>
            <person name="Detter J.C."/>
            <person name="Han C."/>
            <person name="Tapia R."/>
            <person name="Schmutz J."/>
            <person name="Larimer F."/>
            <person name="Land M."/>
            <person name="Hauser L."/>
            <person name="Challacombe J.F."/>
            <person name="Green L."/>
            <person name="Lindler L.E."/>
            <person name="Nikolich M.P."/>
            <person name="Richardson P."/>
        </authorList>
    </citation>
    <scope>NUCLEOTIDE SEQUENCE [LARGE SCALE GENOMIC DNA]</scope>
    <source>
        <strain>PB1/+</strain>
    </source>
</reference>
<name>RHAR_YERPB</name>
<feature type="chain" id="PRO_1000200946" description="HTH-type transcriptional activator RhaR">
    <location>
        <begin position="1"/>
        <end position="290"/>
    </location>
</feature>
<feature type="domain" description="HTH araC/xylS-type" evidence="1">
    <location>
        <begin position="179"/>
        <end position="277"/>
    </location>
</feature>
<feature type="DNA-binding region" description="H-T-H motif" evidence="1">
    <location>
        <begin position="196"/>
        <end position="217"/>
    </location>
</feature>
<feature type="DNA-binding region" description="H-T-H motif" evidence="1">
    <location>
        <begin position="244"/>
        <end position="267"/>
    </location>
</feature>
<feature type="site" description="Interaction with sigma-70" evidence="1">
    <location>
        <position position="246"/>
    </location>
</feature>
<proteinExistence type="inferred from homology"/>
<evidence type="ECO:0000255" key="1">
    <source>
        <dbReference type="HAMAP-Rule" id="MF_01533"/>
    </source>
</evidence>
<organism>
    <name type="scientific">Yersinia pseudotuberculosis serotype IB (strain PB1/+)</name>
    <dbReference type="NCBI Taxonomy" id="502801"/>
    <lineage>
        <taxon>Bacteria</taxon>
        <taxon>Pseudomonadati</taxon>
        <taxon>Pseudomonadota</taxon>
        <taxon>Gammaproteobacteria</taxon>
        <taxon>Enterobacterales</taxon>
        <taxon>Yersiniaceae</taxon>
        <taxon>Yersinia</taxon>
    </lineage>
</organism>
<comment type="function">
    <text evidence="1">Activates expression of the rhaSR operon in response to L-rhamnose.</text>
</comment>
<comment type="subunit">
    <text evidence="1">Binds DNA as a dimer.</text>
</comment>
<comment type="subcellular location">
    <subcellularLocation>
        <location evidence="1">Cytoplasm</location>
    </subcellularLocation>
</comment>
<protein>
    <recommendedName>
        <fullName evidence="1">HTH-type transcriptional activator RhaR</fullName>
    </recommendedName>
    <alternativeName>
        <fullName evidence="1">L-rhamnose operon transcriptional activator RhaR</fullName>
    </alternativeName>
</protein>
<accession>B2K1W6</accession>
<sequence>MRAPLLLESRDYLLSEQMPVAVTNRYPQETFVEHTHQFCEIVIVWRGNGLHVLNDHPYRITCGDVFYIQAADHHSYESVHDLVLDNIIYCPERLHLNAQWHKLLPPLGPEQNQGYWRLTTQGMAQARPIIQQLAQESRKTDSWSIQLTEVLLLQLAIVLKRHRYRAEQAHLLPDGEQLDLIMSALQQSLGAYFDMADFCHKNQLVERSLKQLFRQQTGMSISHYLRQIRLCHAKCLLRGSEHRISDIAARCGFEDSNYFSAVFTREAGMTPRDYRQRFIRSPVLPAKNEP</sequence>
<keyword id="KW-0010">Activator</keyword>
<keyword id="KW-0963">Cytoplasm</keyword>
<keyword id="KW-0238">DNA-binding</keyword>
<keyword id="KW-0677">Repeat</keyword>
<keyword id="KW-0684">Rhamnose metabolism</keyword>
<keyword id="KW-0804">Transcription</keyword>
<keyword id="KW-0805">Transcription regulation</keyword>
<gene>
    <name evidence="1" type="primary">rhaR</name>
    <name type="ordered locus">YPTS_0412</name>
</gene>